<organism>
    <name type="scientific">Avian infectious bronchitis virus (strain D3896)</name>
    <name type="common">IBV</name>
    <dbReference type="NCBI Taxonomy" id="11125"/>
    <lineage>
        <taxon>Viruses</taxon>
        <taxon>Riboviria</taxon>
        <taxon>Orthornavirae</taxon>
        <taxon>Pisuviricota</taxon>
        <taxon>Pisoniviricetes</taxon>
        <taxon>Nidovirales</taxon>
        <taxon>Cornidovirineae</taxon>
        <taxon>Coronaviridae</taxon>
        <taxon>Orthocoronavirinae</taxon>
        <taxon>Gammacoronavirus</taxon>
        <taxon>Igacovirus</taxon>
        <taxon>Avian coronavirus</taxon>
    </lineage>
</organism>
<reference key="1">
    <citation type="journal article" date="1990" name="Nucleic Acids Res.">
        <title>Nucleotide and amino acid sequence of the S1 subunit of the spike glycoprotein of avian infectious bronchitis virus, strain D3896.</title>
        <authorList>
            <person name="Koch G."/>
            <person name="Kant A."/>
        </authorList>
    </citation>
    <scope>NUCLEOTIDE SEQUENCE [GENOMIC RNA]</scope>
</reference>
<feature type="signal peptide" evidence="2">
    <location>
        <begin position="1"/>
        <end position="18"/>
    </location>
</feature>
<feature type="chain" id="PRO_0000037168" description="Spike glycoprotein">
    <location>
        <begin position="19"/>
        <end position="550" status="greater than"/>
    </location>
</feature>
<feature type="chain" id="PRO_0000037169" description="Spike protein S1" evidence="2">
    <location>
        <begin position="19"/>
        <end position="538"/>
    </location>
</feature>
<feature type="chain" id="PRO_0000037170" description="Spike protein S2" evidence="2">
    <location>
        <begin position="539"/>
        <end position="550" status="greater than"/>
    </location>
</feature>
<feature type="topological domain" description="Extracellular" evidence="2">
    <location>
        <begin position="19"/>
        <end position="550" status="greater than"/>
    </location>
</feature>
<feature type="site" description="Cleavage; by host" evidence="2">
    <location>
        <begin position="538"/>
        <end position="539"/>
    </location>
</feature>
<feature type="glycosylation site" description="N-linked (GlcNAc...) asparagine; by host" evidence="2">
    <location>
        <position position="23"/>
    </location>
</feature>
<feature type="glycosylation site" description="N-linked (GlcNAc...) asparagine; by host" evidence="2">
    <location>
        <position position="74"/>
    </location>
</feature>
<feature type="glycosylation site" description="N-linked (GlcNAc...) asparagine; by host" evidence="2">
    <location>
        <position position="102"/>
    </location>
</feature>
<feature type="glycosylation site" description="N-linked (GlcNAc...) asparagine; by host" evidence="2">
    <location>
        <position position="139"/>
    </location>
</feature>
<feature type="glycosylation site" description="N-linked (GlcNAc...) asparagine; by host" evidence="2">
    <location>
        <position position="145"/>
    </location>
</feature>
<feature type="glycosylation site" description="N-linked (GlcNAc...) asparagine; by host" evidence="2">
    <location>
        <position position="164"/>
    </location>
</feature>
<feature type="glycosylation site" description="N-linked (GlcNAc...) asparagine; by host" evidence="2">
    <location>
        <position position="179"/>
    </location>
</feature>
<feature type="glycosylation site" description="N-linked (GlcNAc...) asparagine; by host" evidence="2">
    <location>
        <position position="213"/>
    </location>
</feature>
<feature type="glycosylation site" description="N-linked (GlcNAc...) asparagine; by host" evidence="2">
    <location>
        <position position="238"/>
    </location>
</feature>
<feature type="glycosylation site" description="N-linked (GlcNAc...) asparagine; by host" evidence="2">
    <location>
        <position position="248"/>
    </location>
</feature>
<feature type="glycosylation site" description="N-linked (GlcNAc...) asparagine; by host" evidence="2">
    <location>
        <position position="265"/>
    </location>
</feature>
<feature type="glycosylation site" description="N-linked (GlcNAc...) asparagine; by host" evidence="2">
    <location>
        <position position="272"/>
    </location>
</feature>
<feature type="glycosylation site" description="N-linked (GlcNAc...) asparagine; by host" evidence="2">
    <location>
        <position position="277"/>
    </location>
</feature>
<feature type="glycosylation site" description="N-linked (GlcNAc...) asparagine; by host" evidence="2">
    <location>
        <position position="307"/>
    </location>
</feature>
<feature type="glycosylation site" description="N-linked (GlcNAc...) asparagine; by host" evidence="2">
    <location>
        <position position="426"/>
    </location>
</feature>
<feature type="glycosylation site" description="N-linked (GlcNAc...) asparagine; by host" evidence="2">
    <location>
        <position position="448"/>
    </location>
</feature>
<feature type="glycosylation site" description="N-linked (GlcNAc...) asparagine; by host" evidence="2">
    <location>
        <position position="514"/>
    </location>
</feature>
<feature type="glycosylation site" description="N-linked (GlcNAc...) asparagine; by host" evidence="2">
    <location>
        <position position="531"/>
    </location>
</feature>
<feature type="glycosylation site" description="N-linked (GlcNAc...) asparagine; by host" evidence="2">
    <location>
        <position position="543"/>
    </location>
</feature>
<feature type="non-terminal residue">
    <location>
        <position position="550"/>
    </location>
</feature>
<accession>P17662</accession>
<sequence>MLEKSLLLVTLLFALCSANLFGNNSYVYYYQSAFRPPNGWHLHGGAYEVVNVSTESSNAGTTECTAGAIYWSKNFSAASVAMTAPQNGMLWSTAQFCTAHCNFTDFVVFVTHCYKSASGSCPLTGLIPQYHIRISAMKNSSLFYNLTVAVTKYPRFKSLQCVNNMTSVYLNGDLVFTSNETKDVSAAGVHFKAGGPITYKVMREVKALAYFVNGTAQDVILCDGSPTGLLACQYNTGNFSDGFYPFTNSSLVKEKFIVYRESSVNTTLELTNFTFSNVSNANPNTGGVHTIQLYQTSTAQSGHYNFNFSFLSSFTYKESDYMYGSYHPSCKFRLETINNGLWFNSLSVSLGYGPIQGGCKQSVFQNRATCCYAYSYNGPPLCKGVYRGELTKSFECGLLVFVTKTDGSRIQTRNEPFTLTQHNYNNITLDRCVEYNIYGRVGQGFITNVTNYAINYNYLADGGMAILDTSGAIDIFVVQGEYGLNYYKVNPCEDVNQQFVVSGGKLVGILTSRNETGSQPLENQFYIKIINGTRRSRRSITGNVTNCPYV</sequence>
<proteinExistence type="inferred from homology"/>
<dbReference type="EMBL" id="X52084">
    <property type="protein sequence ID" value="CAA36302.1"/>
    <property type="molecule type" value="Genomic_RNA"/>
</dbReference>
<dbReference type="PIR" id="S10175">
    <property type="entry name" value="VGIHD6"/>
</dbReference>
<dbReference type="SMR" id="P17662"/>
<dbReference type="GlyCosmos" id="P17662">
    <property type="glycosylation" value="19 sites, No reported glycans"/>
</dbReference>
<dbReference type="GO" id="GO:0044173">
    <property type="term" value="C:host cell endoplasmic reticulum-Golgi intermediate compartment membrane"/>
    <property type="evidence" value="ECO:0007669"/>
    <property type="project" value="UniProtKB-SubCell"/>
</dbReference>
<dbReference type="GO" id="GO:0016020">
    <property type="term" value="C:membrane"/>
    <property type="evidence" value="ECO:0007669"/>
    <property type="project" value="UniProtKB-KW"/>
</dbReference>
<dbReference type="GO" id="GO:0019031">
    <property type="term" value="C:viral envelope"/>
    <property type="evidence" value="ECO:0007669"/>
    <property type="project" value="UniProtKB-KW"/>
</dbReference>
<dbReference type="GO" id="GO:0055036">
    <property type="term" value="C:virion membrane"/>
    <property type="evidence" value="ECO:0007669"/>
    <property type="project" value="UniProtKB-SubCell"/>
</dbReference>
<dbReference type="GO" id="GO:0075509">
    <property type="term" value="P:endocytosis involved in viral entry into host cell"/>
    <property type="evidence" value="ECO:0007669"/>
    <property type="project" value="UniProtKB-KW"/>
</dbReference>
<dbReference type="GO" id="GO:0039654">
    <property type="term" value="P:fusion of virus membrane with host endosome membrane"/>
    <property type="evidence" value="ECO:0007669"/>
    <property type="project" value="UniProtKB-KW"/>
</dbReference>
<dbReference type="GO" id="GO:0019062">
    <property type="term" value="P:virion attachment to host cell"/>
    <property type="evidence" value="ECO:0007669"/>
    <property type="project" value="UniProtKB-KW"/>
</dbReference>
<dbReference type="InterPro" id="IPR043607">
    <property type="entry name" value="CoV_S1_C"/>
</dbReference>
<dbReference type="Pfam" id="PF19209">
    <property type="entry name" value="CoV_S1_C"/>
    <property type="match status" value="1"/>
</dbReference>
<gene>
    <name type="primary">S</name>
    <name type="ORF">2</name>
</gene>
<name>SPIKE_IBVD3</name>
<protein>
    <recommendedName>
        <fullName>Spike glycoprotein</fullName>
        <shortName>S glycoprotein</shortName>
    </recommendedName>
    <alternativeName>
        <fullName>E2</fullName>
    </alternativeName>
    <alternativeName>
        <fullName>Peplomer protein</fullName>
    </alternativeName>
    <component>
        <recommendedName>
            <fullName>Spike protein S1</fullName>
        </recommendedName>
    </component>
    <component>
        <recommendedName>
            <fullName>Spike protein S2</fullName>
        </recommendedName>
    </component>
</protein>
<evidence type="ECO:0000250" key="1"/>
<evidence type="ECO:0000255" key="2"/>
<evidence type="ECO:0000305" key="3"/>
<organismHost>
    <name type="scientific">Gallus gallus</name>
    <name type="common">Chicken</name>
    <dbReference type="NCBI Taxonomy" id="9031"/>
</organismHost>
<comment type="function">
    <text>S1 attaches the virion to the cell membrane by interacting with cell receptors, initiating the infection.</text>
</comment>
<comment type="function">
    <text evidence="1">S2 is a class I viral fusion protein. Under the current model, the protein has at least 3 conformational states: pre-fusion native state, pre-hairpin intermediate state, and post-fusion hairpin state. During viral and target cell membrane fusion, the coiled coil regions (heptad repeats) assume a trimer-of-hairpins structure, positioning the fusion peptide in close proximity to the C-terminal region of the ectodomain. The formation of this structure appears to drive apposition and subsequent fusion of viral and target cell membranes (By similarity).</text>
</comment>
<comment type="subunit">
    <text evidence="1">Homotrimer; each monomer consists of a S1 and a S2 subunit. The resulting peplomers protrude from the virus surface as spikes (By similarity).</text>
</comment>
<comment type="subcellular location">
    <molecule>Spike protein S2</molecule>
    <subcellularLocation>
        <location evidence="1">Virion membrane</location>
        <topology evidence="1">Single-pass type I membrane protein</topology>
    </subcellularLocation>
    <subcellularLocation>
        <location evidence="1">Host endoplasmic reticulum-Golgi intermediate compartment membrane</location>
        <topology evidence="1">Single-pass type I membrane protein</topology>
    </subcellularLocation>
    <text evidence="1">Accumulates in the endoplasmic reticulum-Golgi intermediate compartment, where it participates in virus particle assembly. Some S oligomers may be transported to the plasma membrane, where they may mediate cell-cell fusion (By similarity).</text>
</comment>
<comment type="subcellular location">
    <molecule>Spike protein S1</molecule>
    <subcellularLocation>
        <location evidence="1">Virion membrane</location>
        <topology evidence="1">Peripheral membrane protein</topology>
    </subcellularLocation>
    <subcellularLocation>
        <location evidence="1">Host endoplasmic reticulum-Golgi intermediate compartment membrane</location>
        <topology evidence="1">Peripheral membrane protein</topology>
    </subcellularLocation>
    <text evidence="1">Accumulates in the endoplasmic reticulum-Golgi intermediate compartment, where it participates in virus particle assembly. Some S oligomers may be transported to the plasma membrane, where they may mediate cell-cell fusion. S1 is not anchored to the viral envelope, but associates with the extravirion surface through its binding to S2 (By similarity).</text>
</comment>
<comment type="PTM">
    <text evidence="1">Specific enzymatic cleavages in vivo yield mature proteins. The precursor is processed into S1 and S2 by host cell furin or furin-like protease to yield the mature S1 and S2 proteins. The cleavage site between S1 and S2 requires the optimal sequence [KR]-X-[KR]-R. Cleavage is not necessary for virus-cell fusion (By similarity).</text>
</comment>
<comment type="similarity">
    <text evidence="3">Belongs to the coronaviruses spike protein family.</text>
</comment>
<keyword id="KW-0165">Cleavage on pair of basic residues</keyword>
<keyword id="KW-0175">Coiled coil</keyword>
<keyword id="KW-1170">Fusion of virus membrane with host endosomal membrane</keyword>
<keyword id="KW-1168">Fusion of virus membrane with host membrane</keyword>
<keyword id="KW-0325">Glycoprotein</keyword>
<keyword id="KW-1043">Host membrane</keyword>
<keyword id="KW-0945">Host-virus interaction</keyword>
<keyword id="KW-0472">Membrane</keyword>
<keyword id="KW-0732">Signal</keyword>
<keyword id="KW-1161">Viral attachment to host cell</keyword>
<keyword id="KW-0261">Viral envelope protein</keyword>
<keyword id="KW-1162">Viral penetration into host cytoplasm</keyword>
<keyword id="KW-0946">Virion</keyword>
<keyword id="KW-0843">Virulence</keyword>
<keyword id="KW-1164">Virus endocytosis by host</keyword>
<keyword id="KW-1160">Virus entry into host cell</keyword>